<name>BR22A_ODOHA</name>
<keyword id="KW-0878">Amphibian defense peptide</keyword>
<keyword id="KW-0044">Antibiotic</keyword>
<keyword id="KW-0929">Antimicrobial</keyword>
<keyword id="KW-0165">Cleavage on pair of basic residues</keyword>
<keyword id="KW-0204">Cytolysis</keyword>
<keyword id="KW-1015">Disulfide bond</keyword>
<keyword id="KW-0295">Fungicide</keyword>
<keyword id="KW-0354">Hemolysis</keyword>
<keyword id="KW-0964">Secreted</keyword>
<keyword id="KW-0732">Signal</keyword>
<protein>
    <recommendedName>
        <fullName>Brevinin-2HS2A</fullName>
    </recommendedName>
</protein>
<accession>E7EKE0</accession>
<reference evidence="4 6" key="1">
    <citation type="journal article" date="2012" name="Peptides">
        <title>Novel antimicrobial peptides isolated from the skin secretions of Hainan odorous frog, Odorrana hainanensis.</title>
        <authorList>
            <person name="Wang H."/>
            <person name="Yu Z."/>
            <person name="Hu Y."/>
            <person name="Li F."/>
            <person name="Liu L."/>
            <person name="Zheng H."/>
            <person name="Meng H."/>
            <person name="Yang S."/>
            <person name="Yang X."/>
            <person name="Liu J."/>
        </authorList>
    </citation>
    <scope>NUCLEOTIDE SEQUENCE [MRNA]</scope>
    <scope>FUNCTION</scope>
    <source>
        <tissue evidence="3">Skin</tissue>
    </source>
</reference>
<feature type="signal peptide" evidence="2">
    <location>
        <begin position="1"/>
        <end position="22"/>
    </location>
</feature>
<feature type="propeptide" id="PRO_0000423533" evidence="1">
    <location>
        <begin position="23"/>
        <end position="40"/>
    </location>
</feature>
<feature type="peptide" id="PRO_0000423534" description="Brevinin-2HS2A" evidence="1">
    <location>
        <begin position="43"/>
        <end position="75"/>
    </location>
</feature>
<feature type="disulfide bond" evidence="1">
    <location>
        <begin position="69"/>
        <end position="75"/>
    </location>
</feature>
<proteinExistence type="inferred from homology"/>
<sequence length="75" mass="8219">MFTLKKPLLLLFFLGTISLSLCQEERDADEEEGEMIEEEVKRSLLGTVKDLLIGAGKSAAQSVLKGLSCKLSKDC</sequence>
<evidence type="ECO:0000250" key="1">
    <source>
        <dbReference type="UniProtKB" id="A0AEI5"/>
    </source>
</evidence>
<evidence type="ECO:0000255" key="2"/>
<evidence type="ECO:0000269" key="3">
    <source>
    </source>
</evidence>
<evidence type="ECO:0000305" key="4"/>
<evidence type="ECO:0000305" key="5">
    <source>
    </source>
</evidence>
<evidence type="ECO:0000312" key="6">
    <source>
        <dbReference type="EMBL" id="ADV36140.1"/>
    </source>
</evidence>
<organism>
    <name type="scientific">Odorrana hainanensis</name>
    <name type="common">Odor frog</name>
    <name type="synonym">Rana hainanensis</name>
    <dbReference type="NCBI Taxonomy" id="431935"/>
    <lineage>
        <taxon>Eukaryota</taxon>
        <taxon>Metazoa</taxon>
        <taxon>Chordata</taxon>
        <taxon>Craniata</taxon>
        <taxon>Vertebrata</taxon>
        <taxon>Euteleostomi</taxon>
        <taxon>Amphibia</taxon>
        <taxon>Batrachia</taxon>
        <taxon>Anura</taxon>
        <taxon>Neobatrachia</taxon>
        <taxon>Ranoidea</taxon>
        <taxon>Ranidae</taxon>
        <taxon>Odorrana</taxon>
    </lineage>
</organism>
<comment type="function">
    <text evidence="3">Has antimicrobial activity against some Gram-positive bacteria and fungi but has no activity against a range of Gram-negative bacteria except P.faecalis. Has antimicrobial activity against the Gram-positive bacteria S.aureus ATCC 25923 (MIC=19 uM), B.licheniformis X39 (MIC=37.5 uM) and R.rhodochrous X15 (MIC=9.5 uM), is virtually inactive against E.faecium 091299 (MIC=150 uM) and S.carnosus KHS (MIC=150 uM) and inactive against E.faecalis 981. Active against the Gram-negative bacterium P.faecalis X29 (MIC=9.5 uM) and is inactive against E.coli, P.aeruginosa and S.typhi. Active against C.albicans ATCC 2002 (MIC=19 uM) and is also active against the slime mold 090223 (MIC=37.5 uM). Has extremely low hemolytic activity against human erythrocytes (LC(50)=300 uM).</text>
</comment>
<comment type="subcellular location">
    <subcellularLocation>
        <location evidence="1">Secreted</location>
    </subcellularLocation>
</comment>
<comment type="tissue specificity">
    <text evidence="5">Expressed by the skin glands.</text>
</comment>
<comment type="similarity">
    <text evidence="2">Belongs to the frog skin active peptide (FSAP) family. Brevinin subfamily.</text>
</comment>
<dbReference type="EMBL" id="HQ735117">
    <property type="protein sequence ID" value="ADV36140.1"/>
    <property type="molecule type" value="mRNA"/>
</dbReference>
<dbReference type="GO" id="GO:0005576">
    <property type="term" value="C:extracellular region"/>
    <property type="evidence" value="ECO:0007669"/>
    <property type="project" value="UniProtKB-SubCell"/>
</dbReference>
<dbReference type="GO" id="GO:0050832">
    <property type="term" value="P:defense response to fungus"/>
    <property type="evidence" value="ECO:0007669"/>
    <property type="project" value="UniProtKB-KW"/>
</dbReference>
<dbReference type="GO" id="GO:0050829">
    <property type="term" value="P:defense response to Gram-negative bacterium"/>
    <property type="evidence" value="ECO:0007669"/>
    <property type="project" value="UniProtKB-ARBA"/>
</dbReference>
<dbReference type="GO" id="GO:0050830">
    <property type="term" value="P:defense response to Gram-positive bacterium"/>
    <property type="evidence" value="ECO:0007669"/>
    <property type="project" value="UniProtKB-ARBA"/>
</dbReference>
<dbReference type="GO" id="GO:0031640">
    <property type="term" value="P:killing of cells of another organism"/>
    <property type="evidence" value="ECO:0007669"/>
    <property type="project" value="UniProtKB-KW"/>
</dbReference>
<dbReference type="InterPro" id="IPR012521">
    <property type="entry name" value="Antimicrobial_frog_2"/>
</dbReference>
<dbReference type="InterPro" id="IPR004275">
    <property type="entry name" value="Frog_antimicrobial_propeptide"/>
</dbReference>
<dbReference type="Pfam" id="PF08023">
    <property type="entry name" value="Antimicrobial_2"/>
    <property type="match status" value="1"/>
</dbReference>
<dbReference type="Pfam" id="PF03032">
    <property type="entry name" value="FSAP_sig_propep"/>
    <property type="match status" value="1"/>
</dbReference>